<feature type="chain" id="PRO_0000430415" description="V-type proton ATPase subunit c''1">
    <location>
        <begin position="1"/>
        <end position="180"/>
    </location>
</feature>
<feature type="topological domain" description="Lumenal" evidence="2">
    <location>
        <begin position="1"/>
        <end position="26"/>
    </location>
</feature>
<feature type="transmembrane region" description="Helical; Name=1" evidence="2">
    <location>
        <begin position="27"/>
        <end position="47"/>
    </location>
</feature>
<feature type="topological domain" description="Cytoplasmic" evidence="2">
    <location>
        <begin position="48"/>
        <end position="66"/>
    </location>
</feature>
<feature type="transmembrane region" description="Helical; Name=2" evidence="2">
    <location>
        <begin position="67"/>
        <end position="87"/>
    </location>
</feature>
<feature type="topological domain" description="Lumenal" evidence="2">
    <location>
        <begin position="88"/>
        <end position="110"/>
    </location>
</feature>
<feature type="transmembrane region" description="Helical; Name=3" evidence="2">
    <location>
        <begin position="111"/>
        <end position="131"/>
    </location>
</feature>
<feature type="topological domain" description="Cytoplasmic" evidence="2">
    <location>
        <begin position="132"/>
        <end position="149"/>
    </location>
</feature>
<feature type="transmembrane region" description="Helical; Name=4" evidence="2">
    <location>
        <begin position="150"/>
        <end position="170"/>
    </location>
</feature>
<feature type="topological domain" description="Lumenal" evidence="2">
    <location>
        <begin position="171"/>
        <end position="180"/>
    </location>
</feature>
<feature type="site" description="Essential for proton translocation" evidence="1">
    <location>
        <position position="74"/>
    </location>
</feature>
<gene>
    <name type="primary">VHA-c''1</name>
    <name type="synonym">VMA16</name>
    <name type="ordered locus">At4g32530</name>
    <name type="ORF">L23H3.10</name>
</gene>
<sequence length="180" mass="18375">MSGVVALGHASSWGAALVRISPYTFSAIGIAISIGVSVLGAAWGIYITGSSLIGAAIEAPRITSKNLISVIFCEAVAIYGVIVAIILQTKLESVPSSKMYDAESLRAGYAIFASGIIVGFANLVCGLCVGIIGSSCALSDAQNSTLFVKILVIEIFGSALGLFGVIVGIIMSAQATWPTK</sequence>
<keyword id="KW-0025">Alternative splicing</keyword>
<keyword id="KW-0256">Endoplasmic reticulum</keyword>
<keyword id="KW-0333">Golgi apparatus</keyword>
<keyword id="KW-0375">Hydrogen ion transport</keyword>
<keyword id="KW-0406">Ion transport</keyword>
<keyword id="KW-0472">Membrane</keyword>
<keyword id="KW-1185">Reference proteome</keyword>
<keyword id="KW-0812">Transmembrane</keyword>
<keyword id="KW-1133">Transmembrane helix</keyword>
<keyword id="KW-0813">Transport</keyword>
<protein>
    <recommendedName>
        <fullName>V-type proton ATPase subunit c''1</fullName>
        <shortName>V-ATPase subunit c''1</shortName>
    </recommendedName>
    <alternativeName>
        <fullName>Vacuolar H(+)-ATPase subunit c'' isoform 1</fullName>
    </alternativeName>
    <alternativeName>
        <fullName>Vacuolar proton pump subunit c''1</fullName>
    </alternativeName>
</protein>
<dbReference type="EMBL" id="AY226998">
    <property type="protein sequence ID" value="AAO73432.1"/>
    <property type="molecule type" value="mRNA"/>
</dbReference>
<dbReference type="EMBL" id="AL050398">
    <property type="protein sequence ID" value="CAB43690.1"/>
    <property type="molecule type" value="Genomic_DNA"/>
</dbReference>
<dbReference type="EMBL" id="AL161581">
    <property type="protein sequence ID" value="CAB79970.1"/>
    <property type="molecule type" value="Genomic_DNA"/>
</dbReference>
<dbReference type="EMBL" id="CP002687">
    <property type="protein sequence ID" value="AEE86073.1"/>
    <property type="molecule type" value="Genomic_DNA"/>
</dbReference>
<dbReference type="EMBL" id="AY042863">
    <property type="protein sequence ID" value="AAK68803.1"/>
    <property type="molecule type" value="mRNA"/>
</dbReference>
<dbReference type="EMBL" id="AY072480">
    <property type="protein sequence ID" value="AAL66895.1"/>
    <property type="molecule type" value="mRNA"/>
</dbReference>
<dbReference type="EMBL" id="AK220736">
    <property type="protein sequence ID" value="BAD93887.1"/>
    <property type="status" value="ALT_INIT"/>
    <property type="molecule type" value="mRNA"/>
</dbReference>
<dbReference type="PIR" id="T08586">
    <property type="entry name" value="T08586"/>
</dbReference>
<dbReference type="RefSeq" id="NP_194979.1">
    <molecule id="Q9SZY7-1"/>
    <property type="nucleotide sequence ID" value="NM_119405.5"/>
</dbReference>
<dbReference type="SMR" id="Q9SZY7"/>
<dbReference type="BioGRID" id="14674">
    <property type="interactions" value="1"/>
</dbReference>
<dbReference type="FunCoup" id="Q9SZY7">
    <property type="interactions" value="3692"/>
</dbReference>
<dbReference type="IntAct" id="Q9SZY7">
    <property type="interactions" value="2"/>
</dbReference>
<dbReference type="STRING" id="3702.Q9SZY7"/>
<dbReference type="EnsemblPlants" id="AT4G32530.1">
    <molecule id="Q9SZY7-1"/>
    <property type="protein sequence ID" value="AT4G32530.1"/>
    <property type="gene ID" value="AT4G32530"/>
</dbReference>
<dbReference type="GeneID" id="829388"/>
<dbReference type="Gramene" id="AT4G32530.1">
    <molecule id="Q9SZY7-1"/>
    <property type="protein sequence ID" value="AT4G32530.1"/>
    <property type="gene ID" value="AT4G32530"/>
</dbReference>
<dbReference type="KEGG" id="ath:AT4G32530"/>
<dbReference type="Araport" id="AT4G32530"/>
<dbReference type="TAIR" id="AT4G32530"/>
<dbReference type="InParanoid" id="Q9SZY7"/>
<dbReference type="OMA" id="MVNVACG"/>
<dbReference type="OrthoDB" id="1090203at2759"/>
<dbReference type="PhylomeDB" id="Q9SZY7"/>
<dbReference type="PRO" id="PR:Q9SZY7"/>
<dbReference type="Proteomes" id="UP000006548">
    <property type="component" value="Chromosome 4"/>
</dbReference>
<dbReference type="ExpressionAtlas" id="Q9SZY7">
    <property type="expression patterns" value="baseline and differential"/>
</dbReference>
<dbReference type="GO" id="GO:0005789">
    <property type="term" value="C:endoplasmic reticulum membrane"/>
    <property type="evidence" value="ECO:0007669"/>
    <property type="project" value="UniProtKB-SubCell"/>
</dbReference>
<dbReference type="GO" id="GO:0000139">
    <property type="term" value="C:Golgi membrane"/>
    <property type="evidence" value="ECO:0007669"/>
    <property type="project" value="UniProtKB-SubCell"/>
</dbReference>
<dbReference type="GO" id="GO:0033179">
    <property type="term" value="C:proton-transporting V-type ATPase, V0 domain"/>
    <property type="evidence" value="ECO:0007669"/>
    <property type="project" value="InterPro"/>
</dbReference>
<dbReference type="GO" id="GO:0046961">
    <property type="term" value="F:proton-transporting ATPase activity, rotational mechanism"/>
    <property type="evidence" value="ECO:0007669"/>
    <property type="project" value="InterPro"/>
</dbReference>
<dbReference type="CDD" id="cd18177">
    <property type="entry name" value="ATP-synt_Vo_c_ATP6F_rpt1"/>
    <property type="match status" value="1"/>
</dbReference>
<dbReference type="CDD" id="cd18178">
    <property type="entry name" value="ATP-synt_Vo_c_ATP6F_rpt2"/>
    <property type="match status" value="1"/>
</dbReference>
<dbReference type="FunFam" id="1.20.120.610:FF:000002">
    <property type="entry name" value="V-type proton ATPase proteolipid subunit"/>
    <property type="match status" value="1"/>
</dbReference>
<dbReference type="Gene3D" id="1.20.120.610">
    <property type="entry name" value="lithium bound rotor ring of v- atpase"/>
    <property type="match status" value="1"/>
</dbReference>
<dbReference type="InterPro" id="IPR002379">
    <property type="entry name" value="ATPase_proteolipid_c-like_dom"/>
</dbReference>
<dbReference type="InterPro" id="IPR000245">
    <property type="entry name" value="ATPase_proteolipid_csu"/>
</dbReference>
<dbReference type="InterPro" id="IPR035921">
    <property type="entry name" value="F/V-ATP_Csub_sf"/>
</dbReference>
<dbReference type="PANTHER" id="PTHR10263">
    <property type="entry name" value="V-TYPE PROTON ATPASE PROTEOLIPID SUBUNIT"/>
    <property type="match status" value="1"/>
</dbReference>
<dbReference type="Pfam" id="PF00137">
    <property type="entry name" value="ATP-synt_C"/>
    <property type="match status" value="2"/>
</dbReference>
<dbReference type="PRINTS" id="PR00122">
    <property type="entry name" value="VACATPASE"/>
</dbReference>
<dbReference type="SUPFAM" id="SSF81333">
    <property type="entry name" value="F1F0 ATP synthase subunit C"/>
    <property type="match status" value="2"/>
</dbReference>
<comment type="function">
    <text evidence="3">Proton-conducting pore forming subunit of the membrane integral V0 complex of vacuolar ATPase. V-ATPase is responsible for acidifying a variety of intracellular compartments in eukaryotic cells.</text>
</comment>
<comment type="subunit">
    <text evidence="1">V-ATPase is a heteromultimeric enzyme composed of a peripheral catalytic V1 complex (components A to H) attached to an integral membrane V0 proton pore complex (components: a, c, c'', d and e). The proteolipid components c and c'' are present as a hexameric ring that forms the proton-conducting pore (By similarity).</text>
</comment>
<comment type="subcellular location">
    <subcellularLocation>
        <location evidence="4">Endoplasmic reticulum membrane</location>
        <topology evidence="4">Multi-pass membrane protein</topology>
    </subcellularLocation>
    <subcellularLocation>
        <location evidence="4">Golgi apparatus membrane</location>
        <topology evidence="4">Multi-pass membrane protein</topology>
    </subcellularLocation>
</comment>
<comment type="alternative products">
    <event type="alternative splicing"/>
    <isoform>
        <id>Q9SZY7-1</id>
        <name>1</name>
        <sequence type="displayed"/>
    </isoform>
    <text>A number of isoforms are produced. According to EST sequences.</text>
</comment>
<comment type="tissue specificity">
    <text evidence="4">Preferentially expressed in roots.</text>
</comment>
<comment type="similarity">
    <text evidence="5">Belongs to the V-ATPase proteolipid subunit family.</text>
</comment>
<comment type="sequence caution" evidence="5">
    <conflict type="erroneous initiation">
        <sequence resource="EMBL-CDS" id="BAD93887"/>
    </conflict>
    <text>Truncated N-terminus.</text>
</comment>
<organism>
    <name type="scientific">Arabidopsis thaliana</name>
    <name type="common">Mouse-ear cress</name>
    <dbReference type="NCBI Taxonomy" id="3702"/>
    <lineage>
        <taxon>Eukaryota</taxon>
        <taxon>Viridiplantae</taxon>
        <taxon>Streptophyta</taxon>
        <taxon>Embryophyta</taxon>
        <taxon>Tracheophyta</taxon>
        <taxon>Spermatophyta</taxon>
        <taxon>Magnoliopsida</taxon>
        <taxon>eudicotyledons</taxon>
        <taxon>Gunneridae</taxon>
        <taxon>Pentapetalae</taxon>
        <taxon>rosids</taxon>
        <taxon>malvids</taxon>
        <taxon>Brassicales</taxon>
        <taxon>Brassicaceae</taxon>
        <taxon>Camelineae</taxon>
        <taxon>Arabidopsis</taxon>
    </lineage>
</organism>
<accession>Q9SZY7</accession>
<accession>Q570H2</accession>
<reference key="1">
    <citation type="journal article" date="2003" name="J. Exp. Biol.">
        <title>Biochemical support for the V-ATPase rotary mechanism: antibody against HA-tagged Vma7p or Vma16p but not Vma10p inhibits activity.</title>
        <authorList>
            <person name="Aviezer-Hagai K."/>
            <person name="Padler-Karavani V."/>
            <person name="Nelson N."/>
        </authorList>
    </citation>
    <scope>NUCLEOTIDE SEQUENCE [MRNA]</scope>
    <scope>FUNCTION</scope>
</reference>
<reference key="2">
    <citation type="journal article" date="1999" name="Nature">
        <title>Sequence and analysis of chromosome 4 of the plant Arabidopsis thaliana.</title>
        <authorList>
            <person name="Mayer K.F.X."/>
            <person name="Schueller C."/>
            <person name="Wambutt R."/>
            <person name="Murphy G."/>
            <person name="Volckaert G."/>
            <person name="Pohl T."/>
            <person name="Duesterhoeft A."/>
            <person name="Stiekema W."/>
            <person name="Entian K.-D."/>
            <person name="Terryn N."/>
            <person name="Harris B."/>
            <person name="Ansorge W."/>
            <person name="Brandt P."/>
            <person name="Grivell L.A."/>
            <person name="Rieger M."/>
            <person name="Weichselgartner M."/>
            <person name="de Simone V."/>
            <person name="Obermaier B."/>
            <person name="Mache R."/>
            <person name="Mueller M."/>
            <person name="Kreis M."/>
            <person name="Delseny M."/>
            <person name="Puigdomenech P."/>
            <person name="Watson M."/>
            <person name="Schmidtheini T."/>
            <person name="Reichert B."/>
            <person name="Portetelle D."/>
            <person name="Perez-Alonso M."/>
            <person name="Boutry M."/>
            <person name="Bancroft I."/>
            <person name="Vos P."/>
            <person name="Hoheisel J."/>
            <person name="Zimmermann W."/>
            <person name="Wedler H."/>
            <person name="Ridley P."/>
            <person name="Langham S.-A."/>
            <person name="McCullagh B."/>
            <person name="Bilham L."/>
            <person name="Robben J."/>
            <person name="van der Schueren J."/>
            <person name="Grymonprez B."/>
            <person name="Chuang Y.-J."/>
            <person name="Vandenbussche F."/>
            <person name="Braeken M."/>
            <person name="Weltjens I."/>
            <person name="Voet M."/>
            <person name="Bastiaens I."/>
            <person name="Aert R."/>
            <person name="Defoor E."/>
            <person name="Weitzenegger T."/>
            <person name="Bothe G."/>
            <person name="Ramsperger U."/>
            <person name="Hilbert H."/>
            <person name="Braun M."/>
            <person name="Holzer E."/>
            <person name="Brandt A."/>
            <person name="Peters S."/>
            <person name="van Staveren M."/>
            <person name="Dirkse W."/>
            <person name="Mooijman P."/>
            <person name="Klein Lankhorst R."/>
            <person name="Rose M."/>
            <person name="Hauf J."/>
            <person name="Koetter P."/>
            <person name="Berneiser S."/>
            <person name="Hempel S."/>
            <person name="Feldpausch M."/>
            <person name="Lamberth S."/>
            <person name="Van den Daele H."/>
            <person name="De Keyser A."/>
            <person name="Buysshaert C."/>
            <person name="Gielen J."/>
            <person name="Villarroel R."/>
            <person name="De Clercq R."/>
            <person name="van Montagu M."/>
            <person name="Rogers J."/>
            <person name="Cronin A."/>
            <person name="Quail M.A."/>
            <person name="Bray-Allen S."/>
            <person name="Clark L."/>
            <person name="Doggett J."/>
            <person name="Hall S."/>
            <person name="Kay M."/>
            <person name="Lennard N."/>
            <person name="McLay K."/>
            <person name="Mayes R."/>
            <person name="Pettett A."/>
            <person name="Rajandream M.A."/>
            <person name="Lyne M."/>
            <person name="Benes V."/>
            <person name="Rechmann S."/>
            <person name="Borkova D."/>
            <person name="Bloecker H."/>
            <person name="Scharfe M."/>
            <person name="Grimm M."/>
            <person name="Loehnert T.-H."/>
            <person name="Dose S."/>
            <person name="de Haan M."/>
            <person name="Maarse A.C."/>
            <person name="Schaefer M."/>
            <person name="Mueller-Auer S."/>
            <person name="Gabel C."/>
            <person name="Fuchs M."/>
            <person name="Fartmann B."/>
            <person name="Granderath K."/>
            <person name="Dauner D."/>
            <person name="Herzl A."/>
            <person name="Neumann S."/>
            <person name="Argiriou A."/>
            <person name="Vitale D."/>
            <person name="Liguori R."/>
            <person name="Piravandi E."/>
            <person name="Massenet O."/>
            <person name="Quigley F."/>
            <person name="Clabauld G."/>
            <person name="Muendlein A."/>
            <person name="Felber R."/>
            <person name="Schnabl S."/>
            <person name="Hiller R."/>
            <person name="Schmidt W."/>
            <person name="Lecharny A."/>
            <person name="Aubourg S."/>
            <person name="Chefdor F."/>
            <person name="Cooke R."/>
            <person name="Berger C."/>
            <person name="Monfort A."/>
            <person name="Casacuberta E."/>
            <person name="Gibbons T."/>
            <person name="Weber N."/>
            <person name="Vandenbol M."/>
            <person name="Bargues M."/>
            <person name="Terol J."/>
            <person name="Torres A."/>
            <person name="Perez-Perez A."/>
            <person name="Purnelle B."/>
            <person name="Bent E."/>
            <person name="Johnson S."/>
            <person name="Tacon D."/>
            <person name="Jesse T."/>
            <person name="Heijnen L."/>
            <person name="Schwarz S."/>
            <person name="Scholler P."/>
            <person name="Heber S."/>
            <person name="Francs P."/>
            <person name="Bielke C."/>
            <person name="Frishman D."/>
            <person name="Haase D."/>
            <person name="Lemcke K."/>
            <person name="Mewes H.-W."/>
            <person name="Stocker S."/>
            <person name="Zaccaria P."/>
            <person name="Bevan M."/>
            <person name="Wilson R.K."/>
            <person name="de la Bastide M."/>
            <person name="Habermann K."/>
            <person name="Parnell L."/>
            <person name="Dedhia N."/>
            <person name="Gnoj L."/>
            <person name="Schutz K."/>
            <person name="Huang E."/>
            <person name="Spiegel L."/>
            <person name="Sekhon M."/>
            <person name="Murray J."/>
            <person name="Sheet P."/>
            <person name="Cordes M."/>
            <person name="Abu-Threideh J."/>
            <person name="Stoneking T."/>
            <person name="Kalicki J."/>
            <person name="Graves T."/>
            <person name="Harmon G."/>
            <person name="Edwards J."/>
            <person name="Latreille P."/>
            <person name="Courtney L."/>
            <person name="Cloud J."/>
            <person name="Abbott A."/>
            <person name="Scott K."/>
            <person name="Johnson D."/>
            <person name="Minx P."/>
            <person name="Bentley D."/>
            <person name="Fulton B."/>
            <person name="Miller N."/>
            <person name="Greco T."/>
            <person name="Kemp K."/>
            <person name="Kramer J."/>
            <person name="Fulton L."/>
            <person name="Mardis E."/>
            <person name="Dante M."/>
            <person name="Pepin K."/>
            <person name="Hillier L.W."/>
            <person name="Nelson J."/>
            <person name="Spieth J."/>
            <person name="Ryan E."/>
            <person name="Andrews S."/>
            <person name="Geisel C."/>
            <person name="Layman D."/>
            <person name="Du H."/>
            <person name="Ali J."/>
            <person name="Berghoff A."/>
            <person name="Jones K."/>
            <person name="Drone K."/>
            <person name="Cotton M."/>
            <person name="Joshu C."/>
            <person name="Antonoiu B."/>
            <person name="Zidanic M."/>
            <person name="Strong C."/>
            <person name="Sun H."/>
            <person name="Lamar B."/>
            <person name="Yordan C."/>
            <person name="Ma P."/>
            <person name="Zhong J."/>
            <person name="Preston R."/>
            <person name="Vil D."/>
            <person name="Shekher M."/>
            <person name="Matero A."/>
            <person name="Shah R."/>
            <person name="Swaby I.K."/>
            <person name="O'Shaughnessy A."/>
            <person name="Rodriguez M."/>
            <person name="Hoffman J."/>
            <person name="Till S."/>
            <person name="Granat S."/>
            <person name="Shohdy N."/>
            <person name="Hasegawa A."/>
            <person name="Hameed A."/>
            <person name="Lodhi M."/>
            <person name="Johnson A."/>
            <person name="Chen E."/>
            <person name="Marra M.A."/>
            <person name="Martienssen R."/>
            <person name="McCombie W.R."/>
        </authorList>
    </citation>
    <scope>NUCLEOTIDE SEQUENCE [LARGE SCALE GENOMIC DNA]</scope>
    <source>
        <strain>cv. Columbia</strain>
    </source>
</reference>
<reference key="3">
    <citation type="journal article" date="2017" name="Plant J.">
        <title>Araport11: a complete reannotation of the Arabidopsis thaliana reference genome.</title>
        <authorList>
            <person name="Cheng C.Y."/>
            <person name="Krishnakumar V."/>
            <person name="Chan A.P."/>
            <person name="Thibaud-Nissen F."/>
            <person name="Schobel S."/>
            <person name="Town C.D."/>
        </authorList>
    </citation>
    <scope>GENOME REANNOTATION</scope>
    <source>
        <strain>cv. Columbia</strain>
    </source>
</reference>
<reference key="4">
    <citation type="journal article" date="2003" name="Science">
        <title>Empirical analysis of transcriptional activity in the Arabidopsis genome.</title>
        <authorList>
            <person name="Yamada K."/>
            <person name="Lim J."/>
            <person name="Dale J.M."/>
            <person name="Chen H."/>
            <person name="Shinn P."/>
            <person name="Palm C.J."/>
            <person name="Southwick A.M."/>
            <person name="Wu H.C."/>
            <person name="Kim C.J."/>
            <person name="Nguyen M."/>
            <person name="Pham P.K."/>
            <person name="Cheuk R.F."/>
            <person name="Karlin-Newmann G."/>
            <person name="Liu S.X."/>
            <person name="Lam B."/>
            <person name="Sakano H."/>
            <person name="Wu T."/>
            <person name="Yu G."/>
            <person name="Miranda M."/>
            <person name="Quach H.L."/>
            <person name="Tripp M."/>
            <person name="Chang C.H."/>
            <person name="Lee J.M."/>
            <person name="Toriumi M.J."/>
            <person name="Chan M.M."/>
            <person name="Tang C.C."/>
            <person name="Onodera C.S."/>
            <person name="Deng J.M."/>
            <person name="Akiyama K."/>
            <person name="Ansari Y."/>
            <person name="Arakawa T."/>
            <person name="Banh J."/>
            <person name="Banno F."/>
            <person name="Bowser L."/>
            <person name="Brooks S.Y."/>
            <person name="Carninci P."/>
            <person name="Chao Q."/>
            <person name="Choy N."/>
            <person name="Enju A."/>
            <person name="Goldsmith A.D."/>
            <person name="Gurjal M."/>
            <person name="Hansen N.F."/>
            <person name="Hayashizaki Y."/>
            <person name="Johnson-Hopson C."/>
            <person name="Hsuan V.W."/>
            <person name="Iida K."/>
            <person name="Karnes M."/>
            <person name="Khan S."/>
            <person name="Koesema E."/>
            <person name="Ishida J."/>
            <person name="Jiang P.X."/>
            <person name="Jones T."/>
            <person name="Kawai J."/>
            <person name="Kamiya A."/>
            <person name="Meyers C."/>
            <person name="Nakajima M."/>
            <person name="Narusaka M."/>
            <person name="Seki M."/>
            <person name="Sakurai T."/>
            <person name="Satou M."/>
            <person name="Tamse R."/>
            <person name="Vaysberg M."/>
            <person name="Wallender E.K."/>
            <person name="Wong C."/>
            <person name="Yamamura Y."/>
            <person name="Yuan S."/>
            <person name="Shinozaki K."/>
            <person name="Davis R.W."/>
            <person name="Theologis A."/>
            <person name="Ecker J.R."/>
        </authorList>
    </citation>
    <scope>NUCLEOTIDE SEQUENCE [LARGE SCALE MRNA]</scope>
    <source>
        <strain>cv. Columbia</strain>
    </source>
</reference>
<reference key="5">
    <citation type="submission" date="2005-03" db="EMBL/GenBank/DDBJ databases">
        <title>Large-scale analysis of RIKEN Arabidopsis full-length (RAFL) cDNAs.</title>
        <authorList>
            <person name="Totoki Y."/>
            <person name="Seki M."/>
            <person name="Ishida J."/>
            <person name="Nakajima M."/>
            <person name="Enju A."/>
            <person name="Kamiya A."/>
            <person name="Narusaka M."/>
            <person name="Shin-i T."/>
            <person name="Nakagawa M."/>
            <person name="Sakamoto N."/>
            <person name="Oishi K."/>
            <person name="Kohara Y."/>
            <person name="Kobayashi M."/>
            <person name="Toyoda A."/>
            <person name="Sakaki Y."/>
            <person name="Sakurai T."/>
            <person name="Iida K."/>
            <person name="Akiyama K."/>
            <person name="Satou M."/>
            <person name="Toyoda T."/>
            <person name="Konagaya A."/>
            <person name="Carninci P."/>
            <person name="Kawai J."/>
            <person name="Hayashizaki Y."/>
            <person name="Shinozaki K."/>
        </authorList>
    </citation>
    <scope>NUCLEOTIDE SEQUENCE [LARGE SCALE MRNA] OF 91-180</scope>
    <source>
        <strain>cv. Columbia</strain>
    </source>
</reference>
<reference key="6">
    <citation type="journal article" date="2002" name="Trends Plant Sci.">
        <title>A simple nomenclature for a complex proton pump: VHA genes encode the vacuolar H(+)-ATPase.</title>
        <authorList>
            <person name="Sze H."/>
            <person name="Schumacher K."/>
            <person name="Mueller M.L."/>
            <person name="Padmanaban S."/>
            <person name="Taiz L."/>
        </authorList>
    </citation>
    <scope>GENE FAMILY</scope>
    <scope>NOMENCLATURE</scope>
</reference>
<reference key="7">
    <citation type="journal article" date="2008" name="BMC Cell Biol.">
        <title>Organelle-specific isoenzymes of plant V-ATPase as revealed by in vivo-FRET analysis.</title>
        <authorList>
            <person name="Seidel T."/>
            <person name="Schnitzer D."/>
            <person name="Golldack D."/>
            <person name="Sauer M."/>
            <person name="Dietz K.J."/>
        </authorList>
    </citation>
    <scope>TISSUE SPECIFICITY</scope>
    <scope>SUBCELLULAR LOCATION</scope>
    <scope>TOPOLOGY</scope>
</reference>
<evidence type="ECO:0000250" key="1"/>
<evidence type="ECO:0000255" key="2"/>
<evidence type="ECO:0000269" key="3">
    <source>
    </source>
</evidence>
<evidence type="ECO:0000269" key="4">
    <source>
    </source>
</evidence>
<evidence type="ECO:0000305" key="5"/>
<proteinExistence type="evidence at protein level"/>
<name>VATO1_ARATH</name>